<sequence length="218" mass="23298">MSQVIRTLALTGLALAGLSGCVSVPRGQGGAAPAVVGQVSESAQQAETARQAWLQAHPAWSFQGRVAISKGRDGGSGRLDWQQDGPRYHVQLSAPVTRQSWVLTGDTTTGAGRLEGLDGGPRAGADAEQVLLEATGWTIPVNQMPDWVRALRIADAGAARVDLDEHGRPRTVQQDGWTIDFLEWTPASAAQPELPRRIEARNGDAKVRLLVDQWTLSP</sequence>
<name>LOLB_XANCP</name>
<protein>
    <recommendedName>
        <fullName evidence="1">Outer-membrane lipoprotein LolB</fullName>
    </recommendedName>
</protein>
<feature type="signal peptide" evidence="1">
    <location>
        <begin position="1"/>
        <end position="20"/>
    </location>
</feature>
<feature type="chain" id="PRO_0000018319" description="Outer-membrane lipoprotein LolB">
    <location>
        <begin position="21"/>
        <end position="218"/>
    </location>
</feature>
<feature type="lipid moiety-binding region" description="N-palmitoyl cysteine" evidence="1">
    <location>
        <position position="21"/>
    </location>
</feature>
<feature type="lipid moiety-binding region" description="S-diacylglycerol cysteine" evidence="1">
    <location>
        <position position="21"/>
    </location>
</feature>
<organism>
    <name type="scientific">Xanthomonas campestris pv. campestris (strain ATCC 33913 / DSM 3586 / NCPPB 528 / LMG 568 / P 25)</name>
    <dbReference type="NCBI Taxonomy" id="190485"/>
    <lineage>
        <taxon>Bacteria</taxon>
        <taxon>Pseudomonadati</taxon>
        <taxon>Pseudomonadota</taxon>
        <taxon>Gammaproteobacteria</taxon>
        <taxon>Lysobacterales</taxon>
        <taxon>Lysobacteraceae</taxon>
        <taxon>Xanthomonas</taxon>
    </lineage>
</organism>
<comment type="function">
    <text evidence="1">Plays a critical role in the incorporation of lipoproteins in the outer membrane after they are released by the LolA protein.</text>
</comment>
<comment type="subunit">
    <text evidence="1">Monomer.</text>
</comment>
<comment type="subcellular location">
    <subcellularLocation>
        <location evidence="1">Cell outer membrane</location>
        <topology evidence="1">Lipid-anchor</topology>
    </subcellularLocation>
</comment>
<comment type="similarity">
    <text evidence="1">Belongs to the LolB family.</text>
</comment>
<evidence type="ECO:0000255" key="1">
    <source>
        <dbReference type="HAMAP-Rule" id="MF_00233"/>
    </source>
</evidence>
<reference key="1">
    <citation type="journal article" date="2002" name="Nature">
        <title>Comparison of the genomes of two Xanthomonas pathogens with differing host specificities.</title>
        <authorList>
            <person name="da Silva A.C.R."/>
            <person name="Ferro J.A."/>
            <person name="Reinach F.C."/>
            <person name="Farah C.S."/>
            <person name="Furlan L.R."/>
            <person name="Quaggio R.B."/>
            <person name="Monteiro-Vitorello C.B."/>
            <person name="Van Sluys M.A."/>
            <person name="Almeida N.F. Jr."/>
            <person name="Alves L.M.C."/>
            <person name="do Amaral A.M."/>
            <person name="Bertolini M.C."/>
            <person name="Camargo L.E.A."/>
            <person name="Camarotte G."/>
            <person name="Cannavan F."/>
            <person name="Cardozo J."/>
            <person name="Chambergo F."/>
            <person name="Ciapina L.P."/>
            <person name="Cicarelli R.M.B."/>
            <person name="Coutinho L.L."/>
            <person name="Cursino-Santos J.R."/>
            <person name="El-Dorry H."/>
            <person name="Faria J.B."/>
            <person name="Ferreira A.J.S."/>
            <person name="Ferreira R.C.C."/>
            <person name="Ferro M.I.T."/>
            <person name="Formighieri E.F."/>
            <person name="Franco M.C."/>
            <person name="Greggio C.C."/>
            <person name="Gruber A."/>
            <person name="Katsuyama A.M."/>
            <person name="Kishi L.T."/>
            <person name="Leite R.P."/>
            <person name="Lemos E.G.M."/>
            <person name="Lemos M.V.F."/>
            <person name="Locali E.C."/>
            <person name="Machado M.A."/>
            <person name="Madeira A.M.B.N."/>
            <person name="Martinez-Rossi N.M."/>
            <person name="Martins E.C."/>
            <person name="Meidanis J."/>
            <person name="Menck C.F.M."/>
            <person name="Miyaki C.Y."/>
            <person name="Moon D.H."/>
            <person name="Moreira L.M."/>
            <person name="Novo M.T.M."/>
            <person name="Okura V.K."/>
            <person name="Oliveira M.C."/>
            <person name="Oliveira V.R."/>
            <person name="Pereira H.A."/>
            <person name="Rossi A."/>
            <person name="Sena J.A.D."/>
            <person name="Silva C."/>
            <person name="de Souza R.F."/>
            <person name="Spinola L.A.F."/>
            <person name="Takita M.A."/>
            <person name="Tamura R.E."/>
            <person name="Teixeira E.C."/>
            <person name="Tezza R.I.D."/>
            <person name="Trindade dos Santos M."/>
            <person name="Truffi D."/>
            <person name="Tsai S.M."/>
            <person name="White F.F."/>
            <person name="Setubal J.C."/>
            <person name="Kitajima J.P."/>
        </authorList>
    </citation>
    <scope>NUCLEOTIDE SEQUENCE [LARGE SCALE GENOMIC DNA]</scope>
    <source>
        <strain>ATCC 33913 / DSM 3586 / NCPPB 528 / LMG 568 / P 25</strain>
    </source>
</reference>
<keyword id="KW-0998">Cell outer membrane</keyword>
<keyword id="KW-0143">Chaperone</keyword>
<keyword id="KW-0449">Lipoprotein</keyword>
<keyword id="KW-0472">Membrane</keyword>
<keyword id="KW-0564">Palmitate</keyword>
<keyword id="KW-0653">Protein transport</keyword>
<keyword id="KW-1185">Reference proteome</keyword>
<keyword id="KW-0732">Signal</keyword>
<keyword id="KW-0813">Transport</keyword>
<accession>Q8PC65</accession>
<proteinExistence type="inferred from homology"/>
<gene>
    <name evidence="1" type="primary">lolB</name>
    <name type="ordered locus">XCC0870</name>
</gene>
<dbReference type="EMBL" id="AE008922">
    <property type="protein sequence ID" value="AAM40185.1"/>
    <property type="molecule type" value="Genomic_DNA"/>
</dbReference>
<dbReference type="RefSeq" id="NP_636261.1">
    <property type="nucleotide sequence ID" value="NC_003902.1"/>
</dbReference>
<dbReference type="RefSeq" id="WP_011036106.1">
    <property type="nucleotide sequence ID" value="NC_003902.1"/>
</dbReference>
<dbReference type="SMR" id="Q8PC65"/>
<dbReference type="STRING" id="190485.XCC0870"/>
<dbReference type="EnsemblBacteria" id="AAM40185">
    <property type="protein sequence ID" value="AAM40185"/>
    <property type="gene ID" value="XCC0870"/>
</dbReference>
<dbReference type="KEGG" id="xcc:XCC0870"/>
<dbReference type="PATRIC" id="fig|190485.4.peg.946"/>
<dbReference type="eggNOG" id="COG3017">
    <property type="taxonomic scope" value="Bacteria"/>
</dbReference>
<dbReference type="HOGENOM" id="CLU_092816_2_2_6"/>
<dbReference type="OrthoDB" id="9797618at2"/>
<dbReference type="Proteomes" id="UP000001010">
    <property type="component" value="Chromosome"/>
</dbReference>
<dbReference type="GO" id="GO:0009279">
    <property type="term" value="C:cell outer membrane"/>
    <property type="evidence" value="ECO:0007669"/>
    <property type="project" value="UniProtKB-SubCell"/>
</dbReference>
<dbReference type="GO" id="GO:0044874">
    <property type="term" value="P:lipoprotein localization to outer membrane"/>
    <property type="evidence" value="ECO:0007669"/>
    <property type="project" value="UniProtKB-UniRule"/>
</dbReference>
<dbReference type="GO" id="GO:0015031">
    <property type="term" value="P:protein transport"/>
    <property type="evidence" value="ECO:0007669"/>
    <property type="project" value="UniProtKB-KW"/>
</dbReference>
<dbReference type="CDD" id="cd16326">
    <property type="entry name" value="LolB"/>
    <property type="match status" value="1"/>
</dbReference>
<dbReference type="Gene3D" id="2.50.20.10">
    <property type="entry name" value="Lipoprotein localisation LolA/LolB/LppX"/>
    <property type="match status" value="1"/>
</dbReference>
<dbReference type="HAMAP" id="MF_00233">
    <property type="entry name" value="LolB"/>
    <property type="match status" value="1"/>
</dbReference>
<dbReference type="InterPro" id="IPR029046">
    <property type="entry name" value="LolA/LolB/LppX"/>
</dbReference>
<dbReference type="InterPro" id="IPR004565">
    <property type="entry name" value="OM_lipoprot_LolB"/>
</dbReference>
<dbReference type="NCBIfam" id="TIGR00548">
    <property type="entry name" value="lolB"/>
    <property type="match status" value="1"/>
</dbReference>
<dbReference type="Pfam" id="PF03550">
    <property type="entry name" value="LolB"/>
    <property type="match status" value="1"/>
</dbReference>
<dbReference type="SUPFAM" id="SSF89392">
    <property type="entry name" value="Prokaryotic lipoproteins and lipoprotein localization factors"/>
    <property type="match status" value="1"/>
</dbReference>
<dbReference type="PROSITE" id="PS51257">
    <property type="entry name" value="PROKAR_LIPOPROTEIN"/>
    <property type="match status" value="1"/>
</dbReference>